<protein>
    <recommendedName>
        <fullName>Uncharacterized protein YdjG</fullName>
    </recommendedName>
</protein>
<name>YDJG_BACSU</name>
<sequence length="341" mass="38324">MIISYKCPNCGSDMAFDSETGSLSCSSCGRQDNIESLPKENIAARFSDDEAKEYQCKNCGAVLITEAETTATTCSFCGGAAILADRLSGHLAPAKVIPFTISKQEAEQAFRKWCKKGLLTPRGFMSADRIKSITGMYIPFWMFDLNSEVQVRANCTRVHQYEEGDYICTETEHFEAFRDINLDYLKIPVDASEKMKDELMDKLEPYSYEELKDFQTAYLAGYIAEKYNYTDEELFPRAKEKISSYIDSYIHSTFSGYTSVNVRDKHIHTKNVNSFYVLLPVWMVSYDYERAEHIFAMNGQTGKVVGKPPISRGKVAAWFSGIAGGTFLALKLVSLMMGGGF</sequence>
<reference key="1">
    <citation type="journal article" date="1997" name="DNA Res.">
        <title>Sequence analysis of the groESL-cotA region of the Bacillus subtilis genome, containing the restriction/modification system genes.</title>
        <authorList>
            <person name="Kasahara Y."/>
            <person name="Nakai S."/>
            <person name="Ogasawara N."/>
            <person name="Yata K."/>
            <person name="Sadaie Y."/>
        </authorList>
    </citation>
    <scope>NUCLEOTIDE SEQUENCE [GENOMIC DNA]</scope>
    <source>
        <strain>168 / Marburg / ATCC 6051 / DSM 10 / JCM 1465 / NBRC 13719 / NCIMB 3610 / NRRL NRS-744 / VKM B-501</strain>
    </source>
</reference>
<reference key="2">
    <citation type="journal article" date="1997" name="Nature">
        <title>The complete genome sequence of the Gram-positive bacterium Bacillus subtilis.</title>
        <authorList>
            <person name="Kunst F."/>
            <person name="Ogasawara N."/>
            <person name="Moszer I."/>
            <person name="Albertini A.M."/>
            <person name="Alloni G."/>
            <person name="Azevedo V."/>
            <person name="Bertero M.G."/>
            <person name="Bessieres P."/>
            <person name="Bolotin A."/>
            <person name="Borchert S."/>
            <person name="Borriss R."/>
            <person name="Boursier L."/>
            <person name="Brans A."/>
            <person name="Braun M."/>
            <person name="Brignell S.C."/>
            <person name="Bron S."/>
            <person name="Brouillet S."/>
            <person name="Bruschi C.V."/>
            <person name="Caldwell B."/>
            <person name="Capuano V."/>
            <person name="Carter N.M."/>
            <person name="Choi S.-K."/>
            <person name="Codani J.-J."/>
            <person name="Connerton I.F."/>
            <person name="Cummings N.J."/>
            <person name="Daniel R.A."/>
            <person name="Denizot F."/>
            <person name="Devine K.M."/>
            <person name="Duesterhoeft A."/>
            <person name="Ehrlich S.D."/>
            <person name="Emmerson P.T."/>
            <person name="Entian K.-D."/>
            <person name="Errington J."/>
            <person name="Fabret C."/>
            <person name="Ferrari E."/>
            <person name="Foulger D."/>
            <person name="Fritz C."/>
            <person name="Fujita M."/>
            <person name="Fujita Y."/>
            <person name="Fuma S."/>
            <person name="Galizzi A."/>
            <person name="Galleron N."/>
            <person name="Ghim S.-Y."/>
            <person name="Glaser P."/>
            <person name="Goffeau A."/>
            <person name="Golightly E.J."/>
            <person name="Grandi G."/>
            <person name="Guiseppi G."/>
            <person name="Guy B.J."/>
            <person name="Haga K."/>
            <person name="Haiech J."/>
            <person name="Harwood C.R."/>
            <person name="Henaut A."/>
            <person name="Hilbert H."/>
            <person name="Holsappel S."/>
            <person name="Hosono S."/>
            <person name="Hullo M.-F."/>
            <person name="Itaya M."/>
            <person name="Jones L.-M."/>
            <person name="Joris B."/>
            <person name="Karamata D."/>
            <person name="Kasahara Y."/>
            <person name="Klaerr-Blanchard M."/>
            <person name="Klein C."/>
            <person name="Kobayashi Y."/>
            <person name="Koetter P."/>
            <person name="Koningstein G."/>
            <person name="Krogh S."/>
            <person name="Kumano M."/>
            <person name="Kurita K."/>
            <person name="Lapidus A."/>
            <person name="Lardinois S."/>
            <person name="Lauber J."/>
            <person name="Lazarevic V."/>
            <person name="Lee S.-M."/>
            <person name="Levine A."/>
            <person name="Liu H."/>
            <person name="Masuda S."/>
            <person name="Mauel C."/>
            <person name="Medigue C."/>
            <person name="Medina N."/>
            <person name="Mellado R.P."/>
            <person name="Mizuno M."/>
            <person name="Moestl D."/>
            <person name="Nakai S."/>
            <person name="Noback M."/>
            <person name="Noone D."/>
            <person name="O'Reilly M."/>
            <person name="Ogawa K."/>
            <person name="Ogiwara A."/>
            <person name="Oudega B."/>
            <person name="Park S.-H."/>
            <person name="Parro V."/>
            <person name="Pohl T.M."/>
            <person name="Portetelle D."/>
            <person name="Porwollik S."/>
            <person name="Prescott A.M."/>
            <person name="Presecan E."/>
            <person name="Pujic P."/>
            <person name="Purnelle B."/>
            <person name="Rapoport G."/>
            <person name="Rey M."/>
            <person name="Reynolds S."/>
            <person name="Rieger M."/>
            <person name="Rivolta C."/>
            <person name="Rocha E."/>
            <person name="Roche B."/>
            <person name="Rose M."/>
            <person name="Sadaie Y."/>
            <person name="Sato T."/>
            <person name="Scanlan E."/>
            <person name="Schleich S."/>
            <person name="Schroeter R."/>
            <person name="Scoffone F."/>
            <person name="Sekiguchi J."/>
            <person name="Sekowska A."/>
            <person name="Seror S.J."/>
            <person name="Serror P."/>
            <person name="Shin B.-S."/>
            <person name="Soldo B."/>
            <person name="Sorokin A."/>
            <person name="Tacconi E."/>
            <person name="Takagi T."/>
            <person name="Takahashi H."/>
            <person name="Takemaru K."/>
            <person name="Takeuchi M."/>
            <person name="Tamakoshi A."/>
            <person name="Tanaka T."/>
            <person name="Terpstra P."/>
            <person name="Tognoni A."/>
            <person name="Tosato V."/>
            <person name="Uchiyama S."/>
            <person name="Vandenbol M."/>
            <person name="Vannier F."/>
            <person name="Vassarotti A."/>
            <person name="Viari A."/>
            <person name="Wambutt R."/>
            <person name="Wedler E."/>
            <person name="Wedler H."/>
            <person name="Weitzenegger T."/>
            <person name="Winters P."/>
            <person name="Wipat A."/>
            <person name="Yamamoto H."/>
            <person name="Yamane K."/>
            <person name="Yasumoto K."/>
            <person name="Yata K."/>
            <person name="Yoshida K."/>
            <person name="Yoshikawa H.-F."/>
            <person name="Zumstein E."/>
            <person name="Yoshikawa H."/>
            <person name="Danchin A."/>
        </authorList>
    </citation>
    <scope>NUCLEOTIDE SEQUENCE [LARGE SCALE GENOMIC DNA]</scope>
    <source>
        <strain>168</strain>
    </source>
</reference>
<organism>
    <name type="scientific">Bacillus subtilis (strain 168)</name>
    <dbReference type="NCBI Taxonomy" id="224308"/>
    <lineage>
        <taxon>Bacteria</taxon>
        <taxon>Bacillati</taxon>
        <taxon>Bacillota</taxon>
        <taxon>Bacilli</taxon>
        <taxon>Bacillales</taxon>
        <taxon>Bacillaceae</taxon>
        <taxon>Bacillus</taxon>
    </lineage>
</organism>
<proteinExistence type="predicted"/>
<comment type="subcellular location">
    <subcellularLocation>
        <location evidence="2">Cell membrane</location>
        <topology evidence="2">Single-pass membrane protein</topology>
    </subcellularLocation>
</comment>
<feature type="chain" id="PRO_0000359959" description="Uncharacterized protein YdjG">
    <location>
        <begin position="1"/>
        <end position="341"/>
    </location>
</feature>
<feature type="transmembrane region" description="Helical" evidence="1">
    <location>
        <begin position="315"/>
        <end position="337"/>
    </location>
</feature>
<evidence type="ECO:0000255" key="1"/>
<evidence type="ECO:0000305" key="2"/>
<dbReference type="EMBL" id="AB007638">
    <property type="protein sequence ID" value="BAA22762.1"/>
    <property type="molecule type" value="Genomic_DNA"/>
</dbReference>
<dbReference type="EMBL" id="AL009126">
    <property type="protein sequence ID" value="CAB12438.1"/>
    <property type="molecule type" value="Genomic_DNA"/>
</dbReference>
<dbReference type="PIR" id="C69789">
    <property type="entry name" value="C69789"/>
</dbReference>
<dbReference type="RefSeq" id="NP_388500.1">
    <property type="nucleotide sequence ID" value="NC_000964.3"/>
</dbReference>
<dbReference type="RefSeq" id="WP_009966712.1">
    <property type="nucleotide sequence ID" value="NZ_OZ025638.1"/>
</dbReference>
<dbReference type="FunCoup" id="O34434">
    <property type="interactions" value="7"/>
</dbReference>
<dbReference type="STRING" id="224308.BSU06190"/>
<dbReference type="jPOST" id="O34434"/>
<dbReference type="PaxDb" id="224308-BSU06190"/>
<dbReference type="DNASU" id="939489"/>
<dbReference type="EnsemblBacteria" id="CAB12438">
    <property type="protein sequence ID" value="CAB12438"/>
    <property type="gene ID" value="BSU_06190"/>
</dbReference>
<dbReference type="GeneID" id="939489"/>
<dbReference type="KEGG" id="bsu:BSU06190"/>
<dbReference type="PATRIC" id="fig|224308.179.peg.670"/>
<dbReference type="eggNOG" id="COG1198">
    <property type="taxonomic scope" value="Bacteria"/>
</dbReference>
<dbReference type="InParanoid" id="O34434"/>
<dbReference type="OrthoDB" id="3182597at2"/>
<dbReference type="PhylomeDB" id="O34434"/>
<dbReference type="BioCyc" id="BSUB:BSU06190-MONOMER"/>
<dbReference type="Proteomes" id="UP000001570">
    <property type="component" value="Chromosome"/>
</dbReference>
<dbReference type="GO" id="GO:0005886">
    <property type="term" value="C:plasma membrane"/>
    <property type="evidence" value="ECO:0007669"/>
    <property type="project" value="UniProtKB-SubCell"/>
</dbReference>
<dbReference type="Gene3D" id="2.20.28.30">
    <property type="entry name" value="RNA polymerase ii, chain L"/>
    <property type="match status" value="2"/>
</dbReference>
<dbReference type="InterPro" id="IPR013137">
    <property type="entry name" value="Znf_TFIIB"/>
</dbReference>
<dbReference type="PANTHER" id="PTHR37826">
    <property type="entry name" value="FLOTILLIN BAND_7_5 DOMAIN PROTEIN"/>
    <property type="match status" value="1"/>
</dbReference>
<dbReference type="PANTHER" id="PTHR37826:SF3">
    <property type="entry name" value="J DOMAIN-CONTAINING PROTEIN"/>
    <property type="match status" value="1"/>
</dbReference>
<dbReference type="Pfam" id="PF08271">
    <property type="entry name" value="Zn_Ribbon_TF"/>
    <property type="match status" value="1"/>
</dbReference>
<keyword id="KW-1003">Cell membrane</keyword>
<keyword id="KW-0472">Membrane</keyword>
<keyword id="KW-1185">Reference proteome</keyword>
<keyword id="KW-0812">Transmembrane</keyword>
<keyword id="KW-1133">Transmembrane helix</keyword>
<gene>
    <name type="primary">ydjG</name>
    <name type="ordered locus">BSU06190</name>
</gene>
<accession>O34434</accession>
<accession>Q797C7</accession>